<comment type="function">
    <text evidence="1">NDH-1 shuttles electrons from NADH, via FMN and iron-sulfur (Fe-S) centers, to quinones in the respiratory chain. The immediate electron acceptor for the enzyme in this species is believed to be ubiquinone. Couples the redox reaction to proton translocation (for every two electrons transferred, four hydrogen ions are translocated across the cytoplasmic membrane), and thus conserves the redox energy in a proton gradient.</text>
</comment>
<comment type="catalytic activity">
    <reaction evidence="1">
        <text>a quinone + NADH + 5 H(+)(in) = a quinol + NAD(+) + 4 H(+)(out)</text>
        <dbReference type="Rhea" id="RHEA:57888"/>
        <dbReference type="ChEBI" id="CHEBI:15378"/>
        <dbReference type="ChEBI" id="CHEBI:24646"/>
        <dbReference type="ChEBI" id="CHEBI:57540"/>
        <dbReference type="ChEBI" id="CHEBI:57945"/>
        <dbReference type="ChEBI" id="CHEBI:132124"/>
    </reaction>
</comment>
<comment type="cofactor">
    <cofactor evidence="1">
        <name>[4Fe-4S] cluster</name>
        <dbReference type="ChEBI" id="CHEBI:49883"/>
    </cofactor>
    <text evidence="1">Binds 2 [4Fe-4S] clusters per subunit.</text>
</comment>
<comment type="subunit">
    <text evidence="1">NDH-1 is composed of 14 different subunits. Subunits NuoA, H, J, K, L, M, N constitute the membrane sector of the complex.</text>
</comment>
<comment type="subcellular location">
    <subcellularLocation>
        <location evidence="1">Cell inner membrane</location>
        <topology evidence="1">Peripheral membrane protein</topology>
    </subcellularLocation>
</comment>
<comment type="similarity">
    <text evidence="1">Belongs to the complex I 23 kDa subunit family.</text>
</comment>
<evidence type="ECO:0000255" key="1">
    <source>
        <dbReference type="HAMAP-Rule" id="MF_01351"/>
    </source>
</evidence>
<proteinExistence type="inferred from homology"/>
<name>NUOI1_SYNFM</name>
<sequence length="149" mass="16615">MGNLKEILEGGWSLVEGMRVTFRRLLRPVVTVQYPREVVTLSPAFRGHIELKSFADTGTHKCIACGTCERMCPSNVIKVQGTKAQPKGAKVATHYVIDFTRCSLCGICVESCPTGTLQYSTEYELAGESRWDGVIDLMQRFEARRPQSL</sequence>
<dbReference type="EC" id="7.1.1.-" evidence="1"/>
<dbReference type="EMBL" id="CP000478">
    <property type="protein sequence ID" value="ABK15905.1"/>
    <property type="molecule type" value="Genomic_DNA"/>
</dbReference>
<dbReference type="RefSeq" id="WP_011697078.1">
    <property type="nucleotide sequence ID" value="NC_008554.1"/>
</dbReference>
<dbReference type="SMR" id="A0LEQ3"/>
<dbReference type="STRING" id="335543.Sfum_0204"/>
<dbReference type="KEGG" id="sfu:Sfum_0204"/>
<dbReference type="eggNOG" id="COG1143">
    <property type="taxonomic scope" value="Bacteria"/>
</dbReference>
<dbReference type="HOGENOM" id="CLU_067218_4_3_7"/>
<dbReference type="InParanoid" id="A0LEQ3"/>
<dbReference type="OrthoDB" id="9808559at2"/>
<dbReference type="Proteomes" id="UP000001784">
    <property type="component" value="Chromosome"/>
</dbReference>
<dbReference type="GO" id="GO:0005886">
    <property type="term" value="C:plasma membrane"/>
    <property type="evidence" value="ECO:0007669"/>
    <property type="project" value="UniProtKB-SubCell"/>
</dbReference>
<dbReference type="GO" id="GO:0051539">
    <property type="term" value="F:4 iron, 4 sulfur cluster binding"/>
    <property type="evidence" value="ECO:0007669"/>
    <property type="project" value="UniProtKB-KW"/>
</dbReference>
<dbReference type="GO" id="GO:0005506">
    <property type="term" value="F:iron ion binding"/>
    <property type="evidence" value="ECO:0007669"/>
    <property type="project" value="UniProtKB-UniRule"/>
</dbReference>
<dbReference type="GO" id="GO:0050136">
    <property type="term" value="F:NADH:ubiquinone reductase (non-electrogenic) activity"/>
    <property type="evidence" value="ECO:0007669"/>
    <property type="project" value="UniProtKB-UniRule"/>
</dbReference>
<dbReference type="GO" id="GO:0048038">
    <property type="term" value="F:quinone binding"/>
    <property type="evidence" value="ECO:0007669"/>
    <property type="project" value="UniProtKB-KW"/>
</dbReference>
<dbReference type="Gene3D" id="3.30.70.3270">
    <property type="match status" value="1"/>
</dbReference>
<dbReference type="HAMAP" id="MF_01351">
    <property type="entry name" value="NDH1_NuoI"/>
    <property type="match status" value="1"/>
</dbReference>
<dbReference type="InterPro" id="IPR017896">
    <property type="entry name" value="4Fe4S_Fe-S-bd"/>
</dbReference>
<dbReference type="InterPro" id="IPR017900">
    <property type="entry name" value="4Fe4S_Fe_S_CS"/>
</dbReference>
<dbReference type="InterPro" id="IPR010226">
    <property type="entry name" value="NADH_quinone_OxRdtase_chainI"/>
</dbReference>
<dbReference type="NCBIfam" id="TIGR01971">
    <property type="entry name" value="NuoI"/>
    <property type="match status" value="1"/>
</dbReference>
<dbReference type="PANTHER" id="PTHR10849">
    <property type="entry name" value="NADH DEHYDROGENASE UBIQUINONE IRON-SULFUR PROTEIN 8, MITOCHONDRIAL"/>
    <property type="match status" value="1"/>
</dbReference>
<dbReference type="Pfam" id="PF12838">
    <property type="entry name" value="Fer4_7"/>
    <property type="match status" value="1"/>
</dbReference>
<dbReference type="SUPFAM" id="SSF54862">
    <property type="entry name" value="4Fe-4S ferredoxins"/>
    <property type="match status" value="1"/>
</dbReference>
<dbReference type="PROSITE" id="PS00198">
    <property type="entry name" value="4FE4S_FER_1"/>
    <property type="match status" value="2"/>
</dbReference>
<dbReference type="PROSITE" id="PS51379">
    <property type="entry name" value="4FE4S_FER_2"/>
    <property type="match status" value="2"/>
</dbReference>
<protein>
    <recommendedName>
        <fullName evidence="1">NADH-quinone oxidoreductase subunit I 1</fullName>
        <ecNumber evidence="1">7.1.1.-</ecNumber>
    </recommendedName>
    <alternativeName>
        <fullName evidence="1">NADH dehydrogenase I subunit I 1</fullName>
    </alternativeName>
    <alternativeName>
        <fullName evidence="1">NDH-1 subunit I 1</fullName>
    </alternativeName>
</protein>
<accession>A0LEQ3</accession>
<keyword id="KW-0004">4Fe-4S</keyword>
<keyword id="KW-0997">Cell inner membrane</keyword>
<keyword id="KW-1003">Cell membrane</keyword>
<keyword id="KW-0408">Iron</keyword>
<keyword id="KW-0411">Iron-sulfur</keyword>
<keyword id="KW-0472">Membrane</keyword>
<keyword id="KW-0479">Metal-binding</keyword>
<keyword id="KW-0520">NAD</keyword>
<keyword id="KW-0874">Quinone</keyword>
<keyword id="KW-1185">Reference proteome</keyword>
<keyword id="KW-0677">Repeat</keyword>
<keyword id="KW-1278">Translocase</keyword>
<keyword id="KW-0830">Ubiquinone</keyword>
<reference key="1">
    <citation type="submission" date="2006-10" db="EMBL/GenBank/DDBJ databases">
        <title>Complete sequence of Syntrophobacter fumaroxidans MPOB.</title>
        <authorList>
            <consortium name="US DOE Joint Genome Institute"/>
            <person name="Copeland A."/>
            <person name="Lucas S."/>
            <person name="Lapidus A."/>
            <person name="Barry K."/>
            <person name="Detter J.C."/>
            <person name="Glavina del Rio T."/>
            <person name="Hammon N."/>
            <person name="Israni S."/>
            <person name="Pitluck S."/>
            <person name="Goltsman E.G."/>
            <person name="Martinez M."/>
            <person name="Schmutz J."/>
            <person name="Larimer F."/>
            <person name="Land M."/>
            <person name="Hauser L."/>
            <person name="Kyrpides N."/>
            <person name="Kim E."/>
            <person name="Boone D.R."/>
            <person name="Brockman F."/>
            <person name="Culley D."/>
            <person name="Ferry J."/>
            <person name="Gunsalus R."/>
            <person name="McInerney M.J."/>
            <person name="Morrison M."/>
            <person name="Plugge C."/>
            <person name="Rohlin L."/>
            <person name="Scholten J."/>
            <person name="Sieber J."/>
            <person name="Stams A.J.M."/>
            <person name="Worm P."/>
            <person name="Henstra A.M."/>
            <person name="Richardson P."/>
        </authorList>
    </citation>
    <scope>NUCLEOTIDE SEQUENCE [LARGE SCALE GENOMIC DNA]</scope>
    <source>
        <strain>DSM 10017 / MPOB</strain>
    </source>
</reference>
<organism>
    <name type="scientific">Syntrophobacter fumaroxidans (strain DSM 10017 / MPOB)</name>
    <dbReference type="NCBI Taxonomy" id="335543"/>
    <lineage>
        <taxon>Bacteria</taxon>
        <taxon>Pseudomonadati</taxon>
        <taxon>Thermodesulfobacteriota</taxon>
        <taxon>Syntrophobacteria</taxon>
        <taxon>Syntrophobacterales</taxon>
        <taxon>Syntrophobacteraceae</taxon>
        <taxon>Syntrophobacter</taxon>
    </lineage>
</organism>
<gene>
    <name evidence="1" type="primary">nuoI1</name>
    <name type="ordered locus">Sfum_0204</name>
</gene>
<feature type="chain" id="PRO_0000298555" description="NADH-quinone oxidoreductase subunit I 1">
    <location>
        <begin position="1"/>
        <end position="149"/>
    </location>
</feature>
<feature type="domain" description="4Fe-4S ferredoxin-type 1" evidence="1">
    <location>
        <begin position="51"/>
        <end position="82"/>
    </location>
</feature>
<feature type="domain" description="4Fe-4S ferredoxin-type 2" evidence="1">
    <location>
        <begin position="93"/>
        <end position="122"/>
    </location>
</feature>
<feature type="binding site" evidence="1">
    <location>
        <position position="62"/>
    </location>
    <ligand>
        <name>[4Fe-4S] cluster</name>
        <dbReference type="ChEBI" id="CHEBI:49883"/>
        <label>1</label>
    </ligand>
</feature>
<feature type="binding site" evidence="1">
    <location>
        <position position="65"/>
    </location>
    <ligand>
        <name>[4Fe-4S] cluster</name>
        <dbReference type="ChEBI" id="CHEBI:49883"/>
        <label>1</label>
    </ligand>
</feature>
<feature type="binding site" evidence="1">
    <location>
        <position position="68"/>
    </location>
    <ligand>
        <name>[4Fe-4S] cluster</name>
        <dbReference type="ChEBI" id="CHEBI:49883"/>
        <label>1</label>
    </ligand>
</feature>
<feature type="binding site" evidence="1">
    <location>
        <position position="72"/>
    </location>
    <ligand>
        <name>[4Fe-4S] cluster</name>
        <dbReference type="ChEBI" id="CHEBI:49883"/>
        <label>2</label>
    </ligand>
</feature>
<feature type="binding site" evidence="1">
    <location>
        <position position="102"/>
    </location>
    <ligand>
        <name>[4Fe-4S] cluster</name>
        <dbReference type="ChEBI" id="CHEBI:49883"/>
        <label>2</label>
    </ligand>
</feature>
<feature type="binding site" evidence="1">
    <location>
        <position position="105"/>
    </location>
    <ligand>
        <name>[4Fe-4S] cluster</name>
        <dbReference type="ChEBI" id="CHEBI:49883"/>
        <label>2</label>
    </ligand>
</feature>
<feature type="binding site" evidence="1">
    <location>
        <position position="108"/>
    </location>
    <ligand>
        <name>[4Fe-4S] cluster</name>
        <dbReference type="ChEBI" id="CHEBI:49883"/>
        <label>2</label>
    </ligand>
</feature>
<feature type="binding site" evidence="1">
    <location>
        <position position="112"/>
    </location>
    <ligand>
        <name>[4Fe-4S] cluster</name>
        <dbReference type="ChEBI" id="CHEBI:49883"/>
        <label>1</label>
    </ligand>
</feature>